<accession>P52509</accession>
<proteinExistence type="inferred from homology"/>
<evidence type="ECO:0000255" key="1">
    <source>
        <dbReference type="HAMAP-Rule" id="MF_04036"/>
    </source>
</evidence>
<evidence type="ECO:0000255" key="2">
    <source>
        <dbReference type="PROSITE-ProRule" id="PRU01369"/>
    </source>
</evidence>
<sequence>MKTNIFFIFLISILNQIYALFNNSYYSNLEQECIKNILNCTQSKTLSLLEPIDQAPIPKSDIISRLLYHTPYISRRDQVLIDEDFLETFYLLYNNPNQLHTLLSLIKDSESGHNWLGFLNNFERCLSDNTLLTCRDNVCKSYSYEKLKFTGNIFVENIIGFEFNIPSNMINFNMSILIYLENEETRTQRIVRIDHHGINVFDALLNCLRYFSRYYNFSFPLIQEMEKYNEVLPFRSEFSNLLIRTY</sequence>
<feature type="signal peptide" evidence="1">
    <location>
        <begin position="1"/>
        <end position="19"/>
    </location>
</feature>
<feature type="chain" id="PRO_0000038270" description="Envelope glycoprotein L" evidence="1">
    <location>
        <begin position="20"/>
        <end position="246"/>
    </location>
</feature>
<feature type="domain" description="gL betaherpesvirus-type" evidence="2">
    <location>
        <begin position="29"/>
        <end position="235"/>
    </location>
</feature>
<feature type="disulfide bond" description="Interchain" evidence="2">
    <location>
        <position position="33"/>
    </location>
</feature>
<feature type="disulfide bond" description="Interchain" evidence="2">
    <location>
        <position position="40"/>
    </location>
</feature>
<feature type="disulfide bond" description="Interchain" evidence="2">
    <location>
        <position position="125"/>
    </location>
</feature>
<feature type="disulfide bond" evidence="2">
    <location>
        <begin position="134"/>
        <end position="139"/>
    </location>
</feature>
<organismHost>
    <name type="scientific">Homo sapiens</name>
    <name type="common">Human</name>
    <dbReference type="NCBI Taxonomy" id="9606"/>
</organismHost>
<protein>
    <recommendedName>
        <fullName evidence="1">Envelope glycoprotein L</fullName>
        <shortName evidence="1">gL</shortName>
    </recommendedName>
</protein>
<gene>
    <name evidence="1" type="primary">gL</name>
    <name type="synonym">U82</name>
</gene>
<reference key="1">
    <citation type="journal article" date="1996" name="J. Virol.">
        <title>Determination and analysis of the complete nucleotide sequence of human herpesvirus.</title>
        <authorList>
            <person name="Nicholas J."/>
        </authorList>
    </citation>
    <scope>NUCLEOTIDE SEQUENCE [LARGE SCALE GENOMIC DNA]</scope>
</reference>
<comment type="function">
    <text evidence="1">The heterodimer glycoprotein H-glycoprotein L is required for the fusion of viral and plasma membranes leading to virus entry into the host cell. Acts as a functional inhibitor of gH and maintains gH in an inhibited form. Upon binding to host integrins, gL dissociates from gH leading to activation of the viral fusion glycoproteins gB and gH.</text>
</comment>
<comment type="subunit">
    <text evidence="1">Interacts with glycoprotein H (gH); this interaction is necessary for the correct processing and cell surface expression of gH.</text>
</comment>
<comment type="subcellular location">
    <subcellularLocation>
        <location evidence="1">Virion membrane</location>
        <topology evidence="1">Peripheral membrane protein</topology>
        <orientation evidence="1">Extracellular side</orientation>
    </subcellularLocation>
    <subcellularLocation>
        <location evidence="1">Host cell membrane</location>
        <topology evidence="1">Peripheral membrane protein</topology>
        <orientation evidence="1">Extracellular side</orientation>
    </subcellularLocation>
    <subcellularLocation>
        <location evidence="1">Host Golgi apparatus</location>
        <location evidence="1">Host trans-Golgi network</location>
    </subcellularLocation>
    <text evidence="1">gL associates with the extravirion surface through its binding to gH. During virion morphogenesis, this protein probably accumulates in the host trans-Golgi where secondary envelopment occurs.</text>
</comment>
<comment type="similarity">
    <text evidence="2">Belongs to the herpesviridae glycoprotein L (gL) family. Betaherpesvirinae gL subfamily.</text>
</comment>
<name>GL_HHV7J</name>
<dbReference type="EMBL" id="U43400">
    <property type="protein sequence ID" value="AAC54744.1"/>
    <property type="molecule type" value="Genomic_DNA"/>
</dbReference>
<dbReference type="PIR" id="T41984">
    <property type="entry name" value="T41984"/>
</dbReference>
<dbReference type="SMR" id="P52509"/>
<dbReference type="Proteomes" id="UP000009246">
    <property type="component" value="Segment"/>
</dbReference>
<dbReference type="GO" id="GO:0044177">
    <property type="term" value="C:host cell Golgi apparatus"/>
    <property type="evidence" value="ECO:0007669"/>
    <property type="project" value="UniProtKB-SubCell"/>
</dbReference>
<dbReference type="GO" id="GO:0020002">
    <property type="term" value="C:host cell plasma membrane"/>
    <property type="evidence" value="ECO:0007669"/>
    <property type="project" value="UniProtKB-SubCell"/>
</dbReference>
<dbReference type="GO" id="GO:0016020">
    <property type="term" value="C:membrane"/>
    <property type="evidence" value="ECO:0007669"/>
    <property type="project" value="UniProtKB-KW"/>
</dbReference>
<dbReference type="GO" id="GO:0019031">
    <property type="term" value="C:viral envelope"/>
    <property type="evidence" value="ECO:0007669"/>
    <property type="project" value="UniProtKB-UniRule"/>
</dbReference>
<dbReference type="GO" id="GO:0055036">
    <property type="term" value="C:virion membrane"/>
    <property type="evidence" value="ECO:0007669"/>
    <property type="project" value="UniProtKB-SubCell"/>
</dbReference>
<dbReference type="GO" id="GO:0019064">
    <property type="term" value="P:fusion of virus membrane with host plasma membrane"/>
    <property type="evidence" value="ECO:0007669"/>
    <property type="project" value="UniProtKB-UniRule"/>
</dbReference>
<dbReference type="GO" id="GO:0046718">
    <property type="term" value="P:symbiont entry into host cell"/>
    <property type="evidence" value="ECO:0007669"/>
    <property type="project" value="UniProtKB-KW"/>
</dbReference>
<dbReference type="HAMAP" id="MF_04036">
    <property type="entry name" value="HSV_GL_betahv"/>
    <property type="match status" value="1"/>
</dbReference>
<dbReference type="InterPro" id="IPR002689">
    <property type="entry name" value="Cytomegalo_gL"/>
</dbReference>
<dbReference type="Pfam" id="PF01801">
    <property type="entry name" value="Cytomega_gL"/>
    <property type="match status" value="1"/>
</dbReference>
<dbReference type="PROSITE" id="PS52025">
    <property type="entry name" value="GL_BHV"/>
    <property type="match status" value="1"/>
</dbReference>
<keyword id="KW-1015">Disulfide bond</keyword>
<keyword id="KW-1169">Fusion of virus membrane with host cell membrane</keyword>
<keyword id="KW-1168">Fusion of virus membrane with host membrane</keyword>
<keyword id="KW-0325">Glycoprotein</keyword>
<keyword id="KW-1032">Host cell membrane</keyword>
<keyword id="KW-1040">Host Golgi apparatus</keyword>
<keyword id="KW-1043">Host membrane</keyword>
<keyword id="KW-0472">Membrane</keyword>
<keyword id="KW-1185">Reference proteome</keyword>
<keyword id="KW-0732">Signal</keyword>
<keyword id="KW-0261">Viral envelope protein</keyword>
<keyword id="KW-1162">Viral penetration into host cytoplasm</keyword>
<keyword id="KW-0946">Virion</keyword>
<keyword id="KW-1160">Virus entry into host cell</keyword>
<organism>
    <name type="scientific">Human herpesvirus 7 (strain JI)</name>
    <name type="common">HHV-7</name>
    <name type="synonym">Human T lymphotropic virus</name>
    <dbReference type="NCBI Taxonomy" id="57278"/>
    <lineage>
        <taxon>Viruses</taxon>
        <taxon>Duplodnaviria</taxon>
        <taxon>Heunggongvirae</taxon>
        <taxon>Peploviricota</taxon>
        <taxon>Herviviricetes</taxon>
        <taxon>Herpesvirales</taxon>
        <taxon>Orthoherpesviridae</taxon>
        <taxon>Betaherpesvirinae</taxon>
        <taxon>Roseolovirus</taxon>
        <taxon>Roseolovirus humanbeta7</taxon>
        <taxon>Human betaherpesvirus 7</taxon>
    </lineage>
</organism>